<dbReference type="EC" id="2.7.7.3" evidence="1"/>
<dbReference type="EMBL" id="CP001339">
    <property type="protein sequence ID" value="ACL71397.1"/>
    <property type="molecule type" value="Genomic_DNA"/>
</dbReference>
<dbReference type="RefSeq" id="WP_012636886.1">
    <property type="nucleotide sequence ID" value="NC_011901.1"/>
</dbReference>
<dbReference type="SMR" id="B8GUN6"/>
<dbReference type="STRING" id="396588.Tgr7_0298"/>
<dbReference type="KEGG" id="tgr:Tgr7_0298"/>
<dbReference type="eggNOG" id="COG0669">
    <property type="taxonomic scope" value="Bacteria"/>
</dbReference>
<dbReference type="HOGENOM" id="CLU_100149_0_1_6"/>
<dbReference type="OrthoDB" id="9806661at2"/>
<dbReference type="UniPathway" id="UPA00241">
    <property type="reaction ID" value="UER00355"/>
</dbReference>
<dbReference type="Proteomes" id="UP000002383">
    <property type="component" value="Chromosome"/>
</dbReference>
<dbReference type="GO" id="GO:0005737">
    <property type="term" value="C:cytoplasm"/>
    <property type="evidence" value="ECO:0007669"/>
    <property type="project" value="UniProtKB-SubCell"/>
</dbReference>
<dbReference type="GO" id="GO:0005524">
    <property type="term" value="F:ATP binding"/>
    <property type="evidence" value="ECO:0007669"/>
    <property type="project" value="UniProtKB-KW"/>
</dbReference>
<dbReference type="GO" id="GO:0004595">
    <property type="term" value="F:pantetheine-phosphate adenylyltransferase activity"/>
    <property type="evidence" value="ECO:0007669"/>
    <property type="project" value="UniProtKB-UniRule"/>
</dbReference>
<dbReference type="GO" id="GO:0015937">
    <property type="term" value="P:coenzyme A biosynthetic process"/>
    <property type="evidence" value="ECO:0007669"/>
    <property type="project" value="UniProtKB-UniRule"/>
</dbReference>
<dbReference type="CDD" id="cd02163">
    <property type="entry name" value="PPAT"/>
    <property type="match status" value="1"/>
</dbReference>
<dbReference type="Gene3D" id="3.40.50.620">
    <property type="entry name" value="HUPs"/>
    <property type="match status" value="1"/>
</dbReference>
<dbReference type="HAMAP" id="MF_00151">
    <property type="entry name" value="PPAT_bact"/>
    <property type="match status" value="1"/>
</dbReference>
<dbReference type="InterPro" id="IPR004821">
    <property type="entry name" value="Cyt_trans-like"/>
</dbReference>
<dbReference type="InterPro" id="IPR001980">
    <property type="entry name" value="PPAT"/>
</dbReference>
<dbReference type="InterPro" id="IPR014729">
    <property type="entry name" value="Rossmann-like_a/b/a_fold"/>
</dbReference>
<dbReference type="NCBIfam" id="TIGR01510">
    <property type="entry name" value="coaD_prev_kdtB"/>
    <property type="match status" value="1"/>
</dbReference>
<dbReference type="NCBIfam" id="TIGR00125">
    <property type="entry name" value="cyt_tran_rel"/>
    <property type="match status" value="1"/>
</dbReference>
<dbReference type="PANTHER" id="PTHR21342">
    <property type="entry name" value="PHOSPHOPANTETHEINE ADENYLYLTRANSFERASE"/>
    <property type="match status" value="1"/>
</dbReference>
<dbReference type="PANTHER" id="PTHR21342:SF1">
    <property type="entry name" value="PHOSPHOPANTETHEINE ADENYLYLTRANSFERASE"/>
    <property type="match status" value="1"/>
</dbReference>
<dbReference type="Pfam" id="PF01467">
    <property type="entry name" value="CTP_transf_like"/>
    <property type="match status" value="1"/>
</dbReference>
<dbReference type="PRINTS" id="PR01020">
    <property type="entry name" value="LPSBIOSNTHSS"/>
</dbReference>
<dbReference type="SUPFAM" id="SSF52374">
    <property type="entry name" value="Nucleotidylyl transferase"/>
    <property type="match status" value="1"/>
</dbReference>
<evidence type="ECO:0000255" key="1">
    <source>
        <dbReference type="HAMAP-Rule" id="MF_00151"/>
    </source>
</evidence>
<accession>B8GUN6</accession>
<name>COAD_THISH</name>
<sequence>MQVIAVYPGTFDPITNGHTDIVRRATRLFDRVVVAVAASPAKQPFFNLDERVGLARDALSGLGNVEVTGFSGLLAKFMREQQAQVILRGLRAVSDFEHEFQLAGMNRHLAPELETLFLTPAEEFAYVSSSLVREIAALGGDVSHFVSGPVVAALKARMG</sequence>
<feature type="chain" id="PRO_1000123310" description="Phosphopantetheine adenylyltransferase">
    <location>
        <begin position="1"/>
        <end position="159"/>
    </location>
</feature>
<feature type="binding site" evidence="1">
    <location>
        <begin position="10"/>
        <end position="11"/>
    </location>
    <ligand>
        <name>ATP</name>
        <dbReference type="ChEBI" id="CHEBI:30616"/>
    </ligand>
</feature>
<feature type="binding site" evidence="1">
    <location>
        <position position="10"/>
    </location>
    <ligand>
        <name>substrate</name>
    </ligand>
</feature>
<feature type="binding site" evidence="1">
    <location>
        <position position="18"/>
    </location>
    <ligand>
        <name>ATP</name>
        <dbReference type="ChEBI" id="CHEBI:30616"/>
    </ligand>
</feature>
<feature type="binding site" evidence="1">
    <location>
        <position position="42"/>
    </location>
    <ligand>
        <name>substrate</name>
    </ligand>
</feature>
<feature type="binding site" evidence="1">
    <location>
        <position position="74"/>
    </location>
    <ligand>
        <name>substrate</name>
    </ligand>
</feature>
<feature type="binding site" evidence="1">
    <location>
        <position position="88"/>
    </location>
    <ligand>
        <name>substrate</name>
    </ligand>
</feature>
<feature type="binding site" evidence="1">
    <location>
        <begin position="89"/>
        <end position="91"/>
    </location>
    <ligand>
        <name>ATP</name>
        <dbReference type="ChEBI" id="CHEBI:30616"/>
    </ligand>
</feature>
<feature type="binding site" evidence="1">
    <location>
        <position position="99"/>
    </location>
    <ligand>
        <name>ATP</name>
        <dbReference type="ChEBI" id="CHEBI:30616"/>
    </ligand>
</feature>
<feature type="binding site" evidence="1">
    <location>
        <begin position="124"/>
        <end position="130"/>
    </location>
    <ligand>
        <name>ATP</name>
        <dbReference type="ChEBI" id="CHEBI:30616"/>
    </ligand>
</feature>
<feature type="site" description="Transition state stabilizer" evidence="1">
    <location>
        <position position="18"/>
    </location>
</feature>
<organism>
    <name type="scientific">Thioalkalivibrio sulfidiphilus (strain HL-EbGR7)</name>
    <dbReference type="NCBI Taxonomy" id="396588"/>
    <lineage>
        <taxon>Bacteria</taxon>
        <taxon>Pseudomonadati</taxon>
        <taxon>Pseudomonadota</taxon>
        <taxon>Gammaproteobacteria</taxon>
        <taxon>Chromatiales</taxon>
        <taxon>Ectothiorhodospiraceae</taxon>
        <taxon>Thioalkalivibrio</taxon>
    </lineage>
</organism>
<keyword id="KW-0067">ATP-binding</keyword>
<keyword id="KW-0173">Coenzyme A biosynthesis</keyword>
<keyword id="KW-0963">Cytoplasm</keyword>
<keyword id="KW-0460">Magnesium</keyword>
<keyword id="KW-0547">Nucleotide-binding</keyword>
<keyword id="KW-0548">Nucleotidyltransferase</keyword>
<keyword id="KW-1185">Reference proteome</keyword>
<keyword id="KW-0808">Transferase</keyword>
<comment type="function">
    <text evidence="1">Reversibly transfers an adenylyl group from ATP to 4'-phosphopantetheine, yielding dephospho-CoA (dPCoA) and pyrophosphate.</text>
</comment>
<comment type="catalytic activity">
    <reaction evidence="1">
        <text>(R)-4'-phosphopantetheine + ATP + H(+) = 3'-dephospho-CoA + diphosphate</text>
        <dbReference type="Rhea" id="RHEA:19801"/>
        <dbReference type="ChEBI" id="CHEBI:15378"/>
        <dbReference type="ChEBI" id="CHEBI:30616"/>
        <dbReference type="ChEBI" id="CHEBI:33019"/>
        <dbReference type="ChEBI" id="CHEBI:57328"/>
        <dbReference type="ChEBI" id="CHEBI:61723"/>
        <dbReference type="EC" id="2.7.7.3"/>
    </reaction>
</comment>
<comment type="cofactor">
    <cofactor evidence="1">
        <name>Mg(2+)</name>
        <dbReference type="ChEBI" id="CHEBI:18420"/>
    </cofactor>
</comment>
<comment type="pathway">
    <text evidence="1">Cofactor biosynthesis; coenzyme A biosynthesis; CoA from (R)-pantothenate: step 4/5.</text>
</comment>
<comment type="subunit">
    <text evidence="1">Homohexamer.</text>
</comment>
<comment type="subcellular location">
    <subcellularLocation>
        <location evidence="1">Cytoplasm</location>
    </subcellularLocation>
</comment>
<comment type="similarity">
    <text evidence="1">Belongs to the bacterial CoaD family.</text>
</comment>
<reference key="1">
    <citation type="journal article" date="2011" name="Stand. Genomic Sci.">
        <title>Complete genome sequence of 'Thioalkalivibrio sulfidophilus' HL-EbGr7.</title>
        <authorList>
            <person name="Muyzer G."/>
            <person name="Sorokin D.Y."/>
            <person name="Mavromatis K."/>
            <person name="Lapidus A."/>
            <person name="Clum A."/>
            <person name="Ivanova N."/>
            <person name="Pati A."/>
            <person name="d'Haeseleer P."/>
            <person name="Woyke T."/>
            <person name="Kyrpides N.C."/>
        </authorList>
    </citation>
    <scope>NUCLEOTIDE SEQUENCE [LARGE SCALE GENOMIC DNA]</scope>
    <source>
        <strain>HL-EbGR7</strain>
    </source>
</reference>
<gene>
    <name evidence="1" type="primary">coaD</name>
    <name type="ordered locus">Tgr7_0298</name>
</gene>
<protein>
    <recommendedName>
        <fullName evidence="1">Phosphopantetheine adenylyltransferase</fullName>
        <ecNumber evidence="1">2.7.7.3</ecNumber>
    </recommendedName>
    <alternativeName>
        <fullName evidence="1">Dephospho-CoA pyrophosphorylase</fullName>
    </alternativeName>
    <alternativeName>
        <fullName evidence="1">Pantetheine-phosphate adenylyltransferase</fullName>
        <shortName evidence="1">PPAT</shortName>
    </alternativeName>
</protein>
<proteinExistence type="inferred from homology"/>